<name>SYL_BURCJ</name>
<evidence type="ECO:0000255" key="1">
    <source>
        <dbReference type="HAMAP-Rule" id="MF_00049"/>
    </source>
</evidence>
<sequence length="864" mass="96213">MHERYVPADVEAAAQGDWRAADAYKTKEDSQKPKFYCVSMLPYPSGKLHMGHVRNYTINDVMYRYLRMNGYNTLMPMGWDAFGMPAENAAMANGVPPAKWTYDNIDYMKGQMQSMGLAIDWSREIATCKPDYYKWNQWLFLKMLEKGIAYKKTGTVNWDPVDQTVLANEQVIDGRGWRSGALVEKREIPMYYLRITQYADELLNDLDGLGWPERVKIMQQNWIGKSFGVNFGFPYELDGEQKLLRVFTTRADTIMGVTFCAIAAEHPLATRLAQDKPELLAFIEECKRGGVAEADVATMEKKGVATGFSVKHPLTGEPVEVWIGNYVLMSYGEGAVMGVPGHDERDFAFAKKYDLPIKQVIASEGQTYSLDAWQEWYGDKETAVCVNSGKYDGLRYAEAVDAVAADLKAGGFGDKQVTWRLRDWGVSRQRYWGTPIPIIHCPSCGDVPVPEQDLPVVLPEDLVPDGTGNPLAKSEAFLNCTCPTCGAAAKRETDTMDTFVDSSWYFSRYTAPDAETMVDARTDYWMPMDQYIGGIEHAILHLLYSRFWTKVMRDLGLVKFGEPAKNLLTQGMVLNETYYREDAAGKKTWYNPLDVTVTHDDKGRPVGATLNADGQPVVLGGIEKMSKSKNNGVDPQLLIDQYGADTARLFTMFAAPPEQQLEWSGAGVEGASRFLRRVWSFGYGNREALAARAGFDAATLGDADKALRREIYSVLKQADFDYQRLQYNTVVSAAMKMLNAIDGAKGATPAVLRETYGVLLRVLYPVVPHVTFELWKALGYADEFGPLLDAPWPKVDEAALEQAEIELVLQVNGKVRGALKVAKDASRDAIEAAAVADEAFAKFSDGKPAKKIVVVPGRLVNIVV</sequence>
<accession>B4EEW1</accession>
<keyword id="KW-0030">Aminoacyl-tRNA synthetase</keyword>
<keyword id="KW-0067">ATP-binding</keyword>
<keyword id="KW-0963">Cytoplasm</keyword>
<keyword id="KW-0436">Ligase</keyword>
<keyword id="KW-0547">Nucleotide-binding</keyword>
<keyword id="KW-0648">Protein biosynthesis</keyword>
<gene>
    <name evidence="1" type="primary">leuS</name>
    <name type="ordered locus">BceJ2315_33110</name>
    <name type="ORF">BCAL3373</name>
</gene>
<proteinExistence type="inferred from homology"/>
<comment type="catalytic activity">
    <reaction evidence="1">
        <text>tRNA(Leu) + L-leucine + ATP = L-leucyl-tRNA(Leu) + AMP + diphosphate</text>
        <dbReference type="Rhea" id="RHEA:11688"/>
        <dbReference type="Rhea" id="RHEA-COMP:9613"/>
        <dbReference type="Rhea" id="RHEA-COMP:9622"/>
        <dbReference type="ChEBI" id="CHEBI:30616"/>
        <dbReference type="ChEBI" id="CHEBI:33019"/>
        <dbReference type="ChEBI" id="CHEBI:57427"/>
        <dbReference type="ChEBI" id="CHEBI:78442"/>
        <dbReference type="ChEBI" id="CHEBI:78494"/>
        <dbReference type="ChEBI" id="CHEBI:456215"/>
        <dbReference type="EC" id="6.1.1.4"/>
    </reaction>
</comment>
<comment type="subcellular location">
    <subcellularLocation>
        <location evidence="1">Cytoplasm</location>
    </subcellularLocation>
</comment>
<comment type="similarity">
    <text evidence="1">Belongs to the class-I aminoacyl-tRNA synthetase family.</text>
</comment>
<dbReference type="EC" id="6.1.1.4" evidence="1"/>
<dbReference type="EMBL" id="AM747720">
    <property type="protein sequence ID" value="CAR53696.1"/>
    <property type="molecule type" value="Genomic_DNA"/>
</dbReference>
<dbReference type="RefSeq" id="WP_006483409.1">
    <property type="nucleotide sequence ID" value="NC_011000.1"/>
</dbReference>
<dbReference type="SMR" id="B4EEW1"/>
<dbReference type="GeneID" id="56557089"/>
<dbReference type="KEGG" id="bcj:BCAL3373"/>
<dbReference type="eggNOG" id="COG0495">
    <property type="taxonomic scope" value="Bacteria"/>
</dbReference>
<dbReference type="HOGENOM" id="CLU_004427_0_0_4"/>
<dbReference type="BioCyc" id="BCEN216591:G1G1V-3751-MONOMER"/>
<dbReference type="Proteomes" id="UP000001035">
    <property type="component" value="Chromosome 1"/>
</dbReference>
<dbReference type="GO" id="GO:0005829">
    <property type="term" value="C:cytosol"/>
    <property type="evidence" value="ECO:0007669"/>
    <property type="project" value="TreeGrafter"/>
</dbReference>
<dbReference type="GO" id="GO:0002161">
    <property type="term" value="F:aminoacyl-tRNA deacylase activity"/>
    <property type="evidence" value="ECO:0007669"/>
    <property type="project" value="InterPro"/>
</dbReference>
<dbReference type="GO" id="GO:0005524">
    <property type="term" value="F:ATP binding"/>
    <property type="evidence" value="ECO:0007669"/>
    <property type="project" value="UniProtKB-UniRule"/>
</dbReference>
<dbReference type="GO" id="GO:0004823">
    <property type="term" value="F:leucine-tRNA ligase activity"/>
    <property type="evidence" value="ECO:0007669"/>
    <property type="project" value="UniProtKB-UniRule"/>
</dbReference>
<dbReference type="GO" id="GO:0006429">
    <property type="term" value="P:leucyl-tRNA aminoacylation"/>
    <property type="evidence" value="ECO:0007669"/>
    <property type="project" value="UniProtKB-UniRule"/>
</dbReference>
<dbReference type="CDD" id="cd07958">
    <property type="entry name" value="Anticodon_Ia_Leu_BEm"/>
    <property type="match status" value="1"/>
</dbReference>
<dbReference type="CDD" id="cd00812">
    <property type="entry name" value="LeuRS_core"/>
    <property type="match status" value="1"/>
</dbReference>
<dbReference type="FunFam" id="1.10.730.10:FF:000002">
    <property type="entry name" value="Leucine--tRNA ligase"/>
    <property type="match status" value="1"/>
</dbReference>
<dbReference type="FunFam" id="2.20.28.290:FF:000001">
    <property type="entry name" value="Leucine--tRNA ligase"/>
    <property type="match status" value="1"/>
</dbReference>
<dbReference type="FunFam" id="3.10.20.590:FF:000001">
    <property type="entry name" value="Leucine--tRNA ligase"/>
    <property type="match status" value="1"/>
</dbReference>
<dbReference type="FunFam" id="3.40.50.620:FF:000003">
    <property type="entry name" value="Leucine--tRNA ligase"/>
    <property type="match status" value="1"/>
</dbReference>
<dbReference type="FunFam" id="3.40.50.620:FF:000056">
    <property type="entry name" value="Leucine--tRNA ligase"/>
    <property type="match status" value="1"/>
</dbReference>
<dbReference type="FunFam" id="3.90.740.10:FF:000012">
    <property type="entry name" value="Leucine--tRNA ligase"/>
    <property type="match status" value="1"/>
</dbReference>
<dbReference type="Gene3D" id="2.20.28.290">
    <property type="match status" value="1"/>
</dbReference>
<dbReference type="Gene3D" id="3.10.20.590">
    <property type="match status" value="1"/>
</dbReference>
<dbReference type="Gene3D" id="3.40.50.620">
    <property type="entry name" value="HUPs"/>
    <property type="match status" value="2"/>
</dbReference>
<dbReference type="Gene3D" id="1.10.730.10">
    <property type="entry name" value="Isoleucyl-tRNA Synthetase, Domain 1"/>
    <property type="match status" value="1"/>
</dbReference>
<dbReference type="HAMAP" id="MF_00049_B">
    <property type="entry name" value="Leu_tRNA_synth_B"/>
    <property type="match status" value="1"/>
</dbReference>
<dbReference type="InterPro" id="IPR001412">
    <property type="entry name" value="aa-tRNA-synth_I_CS"/>
</dbReference>
<dbReference type="InterPro" id="IPR002300">
    <property type="entry name" value="aa-tRNA-synth_Ia"/>
</dbReference>
<dbReference type="InterPro" id="IPR002302">
    <property type="entry name" value="Leu-tRNA-ligase"/>
</dbReference>
<dbReference type="InterPro" id="IPR025709">
    <property type="entry name" value="Leu_tRNA-synth_edit"/>
</dbReference>
<dbReference type="InterPro" id="IPR013155">
    <property type="entry name" value="M/V/L/I-tRNA-synth_anticd-bd"/>
</dbReference>
<dbReference type="InterPro" id="IPR015413">
    <property type="entry name" value="Methionyl/Leucyl_tRNA_Synth"/>
</dbReference>
<dbReference type="InterPro" id="IPR014729">
    <property type="entry name" value="Rossmann-like_a/b/a_fold"/>
</dbReference>
<dbReference type="InterPro" id="IPR009080">
    <property type="entry name" value="tRNAsynth_Ia_anticodon-bd"/>
</dbReference>
<dbReference type="InterPro" id="IPR009008">
    <property type="entry name" value="Val/Leu/Ile-tRNA-synth_edit"/>
</dbReference>
<dbReference type="NCBIfam" id="TIGR00396">
    <property type="entry name" value="leuS_bact"/>
    <property type="match status" value="1"/>
</dbReference>
<dbReference type="PANTHER" id="PTHR43740:SF2">
    <property type="entry name" value="LEUCINE--TRNA LIGASE, MITOCHONDRIAL"/>
    <property type="match status" value="1"/>
</dbReference>
<dbReference type="PANTHER" id="PTHR43740">
    <property type="entry name" value="LEUCYL-TRNA SYNTHETASE"/>
    <property type="match status" value="1"/>
</dbReference>
<dbReference type="Pfam" id="PF08264">
    <property type="entry name" value="Anticodon_1"/>
    <property type="match status" value="1"/>
</dbReference>
<dbReference type="Pfam" id="PF00133">
    <property type="entry name" value="tRNA-synt_1"/>
    <property type="match status" value="2"/>
</dbReference>
<dbReference type="Pfam" id="PF13603">
    <property type="entry name" value="tRNA-synt_1_2"/>
    <property type="match status" value="1"/>
</dbReference>
<dbReference type="Pfam" id="PF09334">
    <property type="entry name" value="tRNA-synt_1g"/>
    <property type="match status" value="1"/>
</dbReference>
<dbReference type="PRINTS" id="PR00985">
    <property type="entry name" value="TRNASYNTHLEU"/>
</dbReference>
<dbReference type="SUPFAM" id="SSF47323">
    <property type="entry name" value="Anticodon-binding domain of a subclass of class I aminoacyl-tRNA synthetases"/>
    <property type="match status" value="1"/>
</dbReference>
<dbReference type="SUPFAM" id="SSF52374">
    <property type="entry name" value="Nucleotidylyl transferase"/>
    <property type="match status" value="1"/>
</dbReference>
<dbReference type="SUPFAM" id="SSF50677">
    <property type="entry name" value="ValRS/IleRS/LeuRS editing domain"/>
    <property type="match status" value="1"/>
</dbReference>
<dbReference type="PROSITE" id="PS00178">
    <property type="entry name" value="AA_TRNA_LIGASE_I"/>
    <property type="match status" value="1"/>
</dbReference>
<organism>
    <name type="scientific">Burkholderia cenocepacia (strain ATCC BAA-245 / DSM 16553 / LMG 16656 / NCTC 13227 / J2315 / CF5610)</name>
    <name type="common">Burkholderia cepacia (strain J2315)</name>
    <dbReference type="NCBI Taxonomy" id="216591"/>
    <lineage>
        <taxon>Bacteria</taxon>
        <taxon>Pseudomonadati</taxon>
        <taxon>Pseudomonadota</taxon>
        <taxon>Betaproteobacteria</taxon>
        <taxon>Burkholderiales</taxon>
        <taxon>Burkholderiaceae</taxon>
        <taxon>Burkholderia</taxon>
        <taxon>Burkholderia cepacia complex</taxon>
    </lineage>
</organism>
<feature type="chain" id="PRO_1000091298" description="Leucine--tRNA ligase">
    <location>
        <begin position="1"/>
        <end position="864"/>
    </location>
</feature>
<feature type="short sequence motif" description="'HIGH' region">
    <location>
        <begin position="42"/>
        <end position="52"/>
    </location>
</feature>
<feature type="short sequence motif" description="'KMSKS' region">
    <location>
        <begin position="624"/>
        <end position="628"/>
    </location>
</feature>
<feature type="binding site" evidence="1">
    <location>
        <position position="627"/>
    </location>
    <ligand>
        <name>ATP</name>
        <dbReference type="ChEBI" id="CHEBI:30616"/>
    </ligand>
</feature>
<reference key="1">
    <citation type="journal article" date="2009" name="J. Bacteriol.">
        <title>The genome of Burkholderia cenocepacia J2315, an epidemic pathogen of cystic fibrosis patients.</title>
        <authorList>
            <person name="Holden M.T."/>
            <person name="Seth-Smith H.M."/>
            <person name="Crossman L.C."/>
            <person name="Sebaihia M."/>
            <person name="Bentley S.D."/>
            <person name="Cerdeno-Tarraga A.M."/>
            <person name="Thomson N.R."/>
            <person name="Bason N."/>
            <person name="Quail M.A."/>
            <person name="Sharp S."/>
            <person name="Cherevach I."/>
            <person name="Churcher C."/>
            <person name="Goodhead I."/>
            <person name="Hauser H."/>
            <person name="Holroyd N."/>
            <person name="Mungall K."/>
            <person name="Scott P."/>
            <person name="Walker D."/>
            <person name="White B."/>
            <person name="Rose H."/>
            <person name="Iversen P."/>
            <person name="Mil-Homens D."/>
            <person name="Rocha E.P."/>
            <person name="Fialho A.M."/>
            <person name="Baldwin A."/>
            <person name="Dowson C."/>
            <person name="Barrell B.G."/>
            <person name="Govan J.R."/>
            <person name="Vandamme P."/>
            <person name="Hart C.A."/>
            <person name="Mahenthiralingam E."/>
            <person name="Parkhill J."/>
        </authorList>
    </citation>
    <scope>NUCLEOTIDE SEQUENCE [LARGE SCALE GENOMIC DNA]</scope>
    <source>
        <strain>ATCC BAA-245 / DSM 16553 / LMG 16656 / NCTC 13227 / J2315 / CF5610</strain>
    </source>
</reference>
<protein>
    <recommendedName>
        <fullName evidence="1">Leucine--tRNA ligase</fullName>
        <ecNumber evidence="1">6.1.1.4</ecNumber>
    </recommendedName>
    <alternativeName>
        <fullName evidence="1">Leucyl-tRNA synthetase</fullName>
        <shortName evidence="1">LeuRS</shortName>
    </alternativeName>
</protein>